<evidence type="ECO:0000255" key="1">
    <source>
        <dbReference type="HAMAP-Rule" id="MF_00124"/>
    </source>
</evidence>
<keyword id="KW-0067">ATP-binding</keyword>
<keyword id="KW-0963">Cytoplasm</keyword>
<keyword id="KW-0237">DNA synthesis</keyword>
<keyword id="KW-0418">Kinase</keyword>
<keyword id="KW-0479">Metal-binding</keyword>
<keyword id="KW-0547">Nucleotide-binding</keyword>
<keyword id="KW-0808">Transferase</keyword>
<keyword id="KW-0862">Zinc</keyword>
<proteinExistence type="inferred from homology"/>
<accession>B7HY90</accession>
<organism>
    <name type="scientific">Bacillus cereus (strain AH187)</name>
    <dbReference type="NCBI Taxonomy" id="405534"/>
    <lineage>
        <taxon>Bacteria</taxon>
        <taxon>Bacillati</taxon>
        <taxon>Bacillota</taxon>
        <taxon>Bacilli</taxon>
        <taxon>Bacillales</taxon>
        <taxon>Bacillaceae</taxon>
        <taxon>Bacillus</taxon>
        <taxon>Bacillus cereus group</taxon>
    </lineage>
</organism>
<feature type="chain" id="PRO_1000117665" description="Thymidine kinase">
    <location>
        <begin position="1"/>
        <end position="195"/>
    </location>
</feature>
<feature type="active site" description="Proton acceptor" evidence="1">
    <location>
        <position position="89"/>
    </location>
</feature>
<feature type="binding site" evidence="1">
    <location>
        <begin position="15"/>
        <end position="22"/>
    </location>
    <ligand>
        <name>ATP</name>
        <dbReference type="ChEBI" id="CHEBI:30616"/>
    </ligand>
</feature>
<feature type="binding site" evidence="1">
    <location>
        <begin position="88"/>
        <end position="91"/>
    </location>
    <ligand>
        <name>ATP</name>
        <dbReference type="ChEBI" id="CHEBI:30616"/>
    </ligand>
</feature>
<feature type="binding site" evidence="1">
    <location>
        <position position="145"/>
    </location>
    <ligand>
        <name>Zn(2+)</name>
        <dbReference type="ChEBI" id="CHEBI:29105"/>
    </ligand>
</feature>
<feature type="binding site" evidence="1">
    <location>
        <position position="148"/>
    </location>
    <ligand>
        <name>Zn(2+)</name>
        <dbReference type="ChEBI" id="CHEBI:29105"/>
    </ligand>
</feature>
<feature type="binding site" evidence="1">
    <location>
        <position position="183"/>
    </location>
    <ligand>
        <name>Zn(2+)</name>
        <dbReference type="ChEBI" id="CHEBI:29105"/>
    </ligand>
</feature>
<feature type="binding site" evidence="1">
    <location>
        <position position="186"/>
    </location>
    <ligand>
        <name>Zn(2+)</name>
        <dbReference type="ChEBI" id="CHEBI:29105"/>
    </ligand>
</feature>
<dbReference type="EC" id="2.7.1.21" evidence="1"/>
<dbReference type="EMBL" id="CP001177">
    <property type="protein sequence ID" value="ACJ77263.1"/>
    <property type="molecule type" value="Genomic_DNA"/>
</dbReference>
<dbReference type="SMR" id="B7HY90"/>
<dbReference type="KEGG" id="bcr:BCAH187_A5508"/>
<dbReference type="HOGENOM" id="CLU_064400_3_0_9"/>
<dbReference type="Proteomes" id="UP000002214">
    <property type="component" value="Chromosome"/>
</dbReference>
<dbReference type="GO" id="GO:0005829">
    <property type="term" value="C:cytosol"/>
    <property type="evidence" value="ECO:0007669"/>
    <property type="project" value="TreeGrafter"/>
</dbReference>
<dbReference type="GO" id="GO:0005524">
    <property type="term" value="F:ATP binding"/>
    <property type="evidence" value="ECO:0007669"/>
    <property type="project" value="UniProtKB-UniRule"/>
</dbReference>
<dbReference type="GO" id="GO:0004797">
    <property type="term" value="F:thymidine kinase activity"/>
    <property type="evidence" value="ECO:0007669"/>
    <property type="project" value="UniProtKB-UniRule"/>
</dbReference>
<dbReference type="GO" id="GO:0008270">
    <property type="term" value="F:zinc ion binding"/>
    <property type="evidence" value="ECO:0007669"/>
    <property type="project" value="UniProtKB-UniRule"/>
</dbReference>
<dbReference type="GO" id="GO:0071897">
    <property type="term" value="P:DNA biosynthetic process"/>
    <property type="evidence" value="ECO:0007669"/>
    <property type="project" value="UniProtKB-KW"/>
</dbReference>
<dbReference type="GO" id="GO:0046104">
    <property type="term" value="P:thymidine metabolic process"/>
    <property type="evidence" value="ECO:0007669"/>
    <property type="project" value="TreeGrafter"/>
</dbReference>
<dbReference type="FunFam" id="3.30.60.20:FF:000026">
    <property type="entry name" value="Thymidine kinase"/>
    <property type="match status" value="1"/>
</dbReference>
<dbReference type="FunFam" id="3.40.50.300:FF:000384">
    <property type="entry name" value="Thymidine kinase"/>
    <property type="match status" value="1"/>
</dbReference>
<dbReference type="Gene3D" id="3.30.60.20">
    <property type="match status" value="1"/>
</dbReference>
<dbReference type="Gene3D" id="3.40.50.300">
    <property type="entry name" value="P-loop containing nucleotide triphosphate hydrolases"/>
    <property type="match status" value="1"/>
</dbReference>
<dbReference type="HAMAP" id="MF_00124">
    <property type="entry name" value="Thymidine_kinase"/>
    <property type="match status" value="1"/>
</dbReference>
<dbReference type="InterPro" id="IPR027417">
    <property type="entry name" value="P-loop_NTPase"/>
</dbReference>
<dbReference type="InterPro" id="IPR001267">
    <property type="entry name" value="Thymidine_kinase"/>
</dbReference>
<dbReference type="InterPro" id="IPR020633">
    <property type="entry name" value="Thymidine_kinase_CS"/>
</dbReference>
<dbReference type="NCBIfam" id="NF003296">
    <property type="entry name" value="PRK04296.1-1"/>
    <property type="match status" value="1"/>
</dbReference>
<dbReference type="PANTHER" id="PTHR11441">
    <property type="entry name" value="THYMIDINE KINASE"/>
    <property type="match status" value="1"/>
</dbReference>
<dbReference type="PANTHER" id="PTHR11441:SF0">
    <property type="entry name" value="THYMIDINE KINASE, CYTOSOLIC"/>
    <property type="match status" value="1"/>
</dbReference>
<dbReference type="Pfam" id="PF00265">
    <property type="entry name" value="TK"/>
    <property type="match status" value="1"/>
</dbReference>
<dbReference type="PIRSF" id="PIRSF035805">
    <property type="entry name" value="TK_cell"/>
    <property type="match status" value="1"/>
</dbReference>
<dbReference type="SUPFAM" id="SSF57716">
    <property type="entry name" value="Glucocorticoid receptor-like (DNA-binding domain)"/>
    <property type="match status" value="1"/>
</dbReference>
<dbReference type="SUPFAM" id="SSF52540">
    <property type="entry name" value="P-loop containing nucleoside triphosphate hydrolases"/>
    <property type="match status" value="1"/>
</dbReference>
<dbReference type="PROSITE" id="PS00603">
    <property type="entry name" value="TK_CELLULAR_TYPE"/>
    <property type="match status" value="1"/>
</dbReference>
<comment type="catalytic activity">
    <reaction evidence="1">
        <text>thymidine + ATP = dTMP + ADP + H(+)</text>
        <dbReference type="Rhea" id="RHEA:19129"/>
        <dbReference type="ChEBI" id="CHEBI:15378"/>
        <dbReference type="ChEBI" id="CHEBI:17748"/>
        <dbReference type="ChEBI" id="CHEBI:30616"/>
        <dbReference type="ChEBI" id="CHEBI:63528"/>
        <dbReference type="ChEBI" id="CHEBI:456216"/>
        <dbReference type="EC" id="2.7.1.21"/>
    </reaction>
</comment>
<comment type="subunit">
    <text evidence="1">Homotetramer.</text>
</comment>
<comment type="subcellular location">
    <subcellularLocation>
        <location evidence="1">Cytoplasm</location>
    </subcellularLocation>
</comment>
<comment type="similarity">
    <text evidence="1">Belongs to the thymidine kinase family.</text>
</comment>
<sequence length="195" mass="21716">MYLINQNGWIEVICGSMFSGKSEELIRRVRRTQFAKQHAIVFKPCIDNRYSEEDVVSHNGLKVKAVPVSASKDIFEHITEEMDVIAIDEVQFFDGDIVEVVQVLANRGYRVIVAGLDQDFRGLPFGQVPQLMAIAEHVTKLQAVCSACGSPASRTQRLIDGEPAAFDDPIILVGASESYEPRCRHCHAVPTNKDK</sequence>
<protein>
    <recommendedName>
        <fullName evidence="1">Thymidine kinase</fullName>
        <ecNumber evidence="1">2.7.1.21</ecNumber>
    </recommendedName>
</protein>
<gene>
    <name evidence="1" type="primary">tdk</name>
    <name type="ordered locus">BCAH187_A5508</name>
</gene>
<reference key="1">
    <citation type="submission" date="2008-10" db="EMBL/GenBank/DDBJ databases">
        <title>Genome sequence of Bacillus cereus AH187.</title>
        <authorList>
            <person name="Dodson R.J."/>
            <person name="Durkin A.S."/>
            <person name="Rosovitz M.J."/>
            <person name="Rasko D.A."/>
            <person name="Kolsto A.B."/>
            <person name="Okstad O.A."/>
            <person name="Ravel J."/>
            <person name="Sutton G."/>
        </authorList>
    </citation>
    <scope>NUCLEOTIDE SEQUENCE [LARGE SCALE GENOMIC DNA]</scope>
    <source>
        <strain>AH187</strain>
    </source>
</reference>
<name>KITH_BACC7</name>